<accession>A5DUA7</accession>
<reference key="1">
    <citation type="journal article" date="2009" name="Nature">
        <title>Evolution of pathogenicity and sexual reproduction in eight Candida genomes.</title>
        <authorList>
            <person name="Butler G."/>
            <person name="Rasmussen M.D."/>
            <person name="Lin M.F."/>
            <person name="Santos M.A.S."/>
            <person name="Sakthikumar S."/>
            <person name="Munro C.A."/>
            <person name="Rheinbay E."/>
            <person name="Grabherr M."/>
            <person name="Forche A."/>
            <person name="Reedy J.L."/>
            <person name="Agrafioti I."/>
            <person name="Arnaud M.B."/>
            <person name="Bates S."/>
            <person name="Brown A.J.P."/>
            <person name="Brunke S."/>
            <person name="Costanzo M.C."/>
            <person name="Fitzpatrick D.A."/>
            <person name="de Groot P.W.J."/>
            <person name="Harris D."/>
            <person name="Hoyer L.L."/>
            <person name="Hube B."/>
            <person name="Klis F.M."/>
            <person name="Kodira C."/>
            <person name="Lennard N."/>
            <person name="Logue M.E."/>
            <person name="Martin R."/>
            <person name="Neiman A.M."/>
            <person name="Nikolaou E."/>
            <person name="Quail M.A."/>
            <person name="Quinn J."/>
            <person name="Santos M.C."/>
            <person name="Schmitzberger F.F."/>
            <person name="Sherlock G."/>
            <person name="Shah P."/>
            <person name="Silverstein K.A.T."/>
            <person name="Skrzypek M.S."/>
            <person name="Soll D."/>
            <person name="Staggs R."/>
            <person name="Stansfield I."/>
            <person name="Stumpf M.P.H."/>
            <person name="Sudbery P.E."/>
            <person name="Srikantha T."/>
            <person name="Zeng Q."/>
            <person name="Berman J."/>
            <person name="Berriman M."/>
            <person name="Heitman J."/>
            <person name="Gow N.A.R."/>
            <person name="Lorenz M.C."/>
            <person name="Birren B.W."/>
            <person name="Kellis M."/>
            <person name="Cuomo C.A."/>
        </authorList>
    </citation>
    <scope>NUCLEOTIDE SEQUENCE [LARGE SCALE GENOMIC DNA]</scope>
    <source>
        <strain>ATCC 11503 / BCRC 21390 / CBS 2605 / JCM 1781 / NBRC 1676 / NRRL YB-4239</strain>
    </source>
</reference>
<protein>
    <recommendedName>
        <fullName evidence="1">Enolase-phosphatase E1</fullName>
        <ecNumber evidence="1">3.1.3.77</ecNumber>
    </recommendedName>
    <alternativeName>
        <fullName evidence="1">2,3-diketo-5-methylthio-1-phosphopentane phosphatase</fullName>
    </alternativeName>
</protein>
<name>ENOPH_LODEL</name>
<evidence type="ECO:0000255" key="1">
    <source>
        <dbReference type="HAMAP-Rule" id="MF_03117"/>
    </source>
</evidence>
<keyword id="KW-0028">Amino-acid biosynthesis</keyword>
<keyword id="KW-0963">Cytoplasm</keyword>
<keyword id="KW-0378">Hydrolase</keyword>
<keyword id="KW-0460">Magnesium</keyword>
<keyword id="KW-0479">Metal-binding</keyword>
<keyword id="KW-0486">Methionine biosynthesis</keyword>
<keyword id="KW-0539">Nucleus</keyword>
<keyword id="KW-1185">Reference proteome</keyword>
<proteinExistence type="inferred from homology"/>
<feature type="chain" id="PRO_0000394002" description="Enolase-phosphatase E1">
    <location>
        <begin position="1"/>
        <end position="249"/>
    </location>
</feature>
<feature type="binding site" evidence="1">
    <location>
        <position position="9"/>
    </location>
    <ligand>
        <name>Mg(2+)</name>
        <dbReference type="ChEBI" id="CHEBI:18420"/>
    </ligand>
</feature>
<feature type="binding site" evidence="1">
    <location>
        <position position="11"/>
    </location>
    <ligand>
        <name>Mg(2+)</name>
        <dbReference type="ChEBI" id="CHEBI:18420"/>
    </ligand>
</feature>
<feature type="binding site" evidence="1">
    <location>
        <begin position="137"/>
        <end position="138"/>
    </location>
    <ligand>
        <name>substrate</name>
    </ligand>
</feature>
<feature type="binding site" evidence="1">
    <location>
        <position position="177"/>
    </location>
    <ligand>
        <name>substrate</name>
    </ligand>
</feature>
<feature type="binding site" evidence="1">
    <location>
        <position position="204"/>
    </location>
    <ligand>
        <name>Mg(2+)</name>
        <dbReference type="ChEBI" id="CHEBI:18420"/>
    </ligand>
</feature>
<dbReference type="EC" id="3.1.3.77" evidence="1"/>
<dbReference type="EMBL" id="CH981524">
    <property type="protein sequence ID" value="EDK42765.1"/>
    <property type="molecule type" value="Genomic_DNA"/>
</dbReference>
<dbReference type="RefSeq" id="XP_001528423.1">
    <property type="nucleotide sequence ID" value="XM_001528373.1"/>
</dbReference>
<dbReference type="SMR" id="A5DUA7"/>
<dbReference type="FunCoup" id="A5DUA7">
    <property type="interactions" value="624"/>
</dbReference>
<dbReference type="STRING" id="379508.A5DUA7"/>
<dbReference type="GeneID" id="5235807"/>
<dbReference type="KEGG" id="lel:PVL30_000908"/>
<dbReference type="VEuPathDB" id="FungiDB:LELG_00943"/>
<dbReference type="eggNOG" id="KOG2630">
    <property type="taxonomic scope" value="Eukaryota"/>
</dbReference>
<dbReference type="HOGENOM" id="CLU_023273_1_1_1"/>
<dbReference type="InParanoid" id="A5DUA7"/>
<dbReference type="OMA" id="EWDANGI"/>
<dbReference type="OrthoDB" id="272500at2759"/>
<dbReference type="UniPathway" id="UPA00904">
    <property type="reaction ID" value="UER00876"/>
</dbReference>
<dbReference type="UniPathway" id="UPA00904">
    <property type="reaction ID" value="UER00877"/>
</dbReference>
<dbReference type="Proteomes" id="UP000001996">
    <property type="component" value="Unassembled WGS sequence"/>
</dbReference>
<dbReference type="GO" id="GO:0005737">
    <property type="term" value="C:cytoplasm"/>
    <property type="evidence" value="ECO:0007669"/>
    <property type="project" value="UniProtKB-SubCell"/>
</dbReference>
<dbReference type="GO" id="GO:0005634">
    <property type="term" value="C:nucleus"/>
    <property type="evidence" value="ECO:0007669"/>
    <property type="project" value="UniProtKB-SubCell"/>
</dbReference>
<dbReference type="GO" id="GO:0043874">
    <property type="term" value="F:acireductone synthase activity"/>
    <property type="evidence" value="ECO:0007669"/>
    <property type="project" value="UniProtKB-EC"/>
</dbReference>
<dbReference type="GO" id="GO:0000287">
    <property type="term" value="F:magnesium ion binding"/>
    <property type="evidence" value="ECO:0007669"/>
    <property type="project" value="UniProtKB-UniRule"/>
</dbReference>
<dbReference type="GO" id="GO:0019509">
    <property type="term" value="P:L-methionine salvage from methylthioadenosine"/>
    <property type="evidence" value="ECO:0007669"/>
    <property type="project" value="UniProtKB-UniRule"/>
</dbReference>
<dbReference type="CDD" id="cd01629">
    <property type="entry name" value="HAD_EP"/>
    <property type="match status" value="1"/>
</dbReference>
<dbReference type="Gene3D" id="1.10.720.60">
    <property type="match status" value="1"/>
</dbReference>
<dbReference type="Gene3D" id="3.40.50.1000">
    <property type="entry name" value="HAD superfamily/HAD-like"/>
    <property type="match status" value="1"/>
</dbReference>
<dbReference type="HAMAP" id="MF_03117">
    <property type="entry name" value="Salvage_MtnC_euk"/>
    <property type="match status" value="1"/>
</dbReference>
<dbReference type="InterPro" id="IPR023943">
    <property type="entry name" value="Enolase-ppase_E1"/>
</dbReference>
<dbReference type="InterPro" id="IPR027511">
    <property type="entry name" value="ENOPH1_eukaryotes"/>
</dbReference>
<dbReference type="InterPro" id="IPR036412">
    <property type="entry name" value="HAD-like_sf"/>
</dbReference>
<dbReference type="InterPro" id="IPR023214">
    <property type="entry name" value="HAD_sf"/>
</dbReference>
<dbReference type="NCBIfam" id="TIGR01691">
    <property type="entry name" value="enolase-ppase"/>
    <property type="match status" value="1"/>
</dbReference>
<dbReference type="PANTHER" id="PTHR20371">
    <property type="entry name" value="ENOLASE-PHOSPHATASE E1"/>
    <property type="match status" value="1"/>
</dbReference>
<dbReference type="PANTHER" id="PTHR20371:SF1">
    <property type="entry name" value="ENOLASE-PHOSPHATASE E1"/>
    <property type="match status" value="1"/>
</dbReference>
<dbReference type="Pfam" id="PF00702">
    <property type="entry name" value="Hydrolase"/>
    <property type="match status" value="1"/>
</dbReference>
<dbReference type="SFLD" id="SFLDG01133">
    <property type="entry name" value="C1.5.4:_Enolase-phosphatase_Li"/>
    <property type="match status" value="1"/>
</dbReference>
<dbReference type="SFLD" id="SFLDS00003">
    <property type="entry name" value="Haloacid_Dehalogenase"/>
    <property type="match status" value="1"/>
</dbReference>
<dbReference type="SUPFAM" id="SSF56784">
    <property type="entry name" value="HAD-like"/>
    <property type="match status" value="1"/>
</dbReference>
<organism>
    <name type="scientific">Lodderomyces elongisporus (strain ATCC 11503 / CBS 2605 / JCM 1781 / NBRC 1676 / NRRL YB-4239)</name>
    <name type="common">Yeast</name>
    <name type="synonym">Saccharomyces elongisporus</name>
    <dbReference type="NCBI Taxonomy" id="379508"/>
    <lineage>
        <taxon>Eukaryota</taxon>
        <taxon>Fungi</taxon>
        <taxon>Dikarya</taxon>
        <taxon>Ascomycota</taxon>
        <taxon>Saccharomycotina</taxon>
        <taxon>Pichiomycetes</taxon>
        <taxon>Debaryomycetaceae</taxon>
        <taxon>Candida/Lodderomyces clade</taxon>
        <taxon>Lodderomyces</taxon>
    </lineage>
</organism>
<sequence>MTIDTVILDIEGTICPISFVKSVLFPYFVKQLPTTLNTIQFPLNLNINDTNSNQASIVQTLSKLPLSVTTSSESTYNYLKGLVDNDVKDPVLKALQGLIWKQGYESGEIKSPVYPDSIDFIEKFPKREANCKIYIYSSGSINAQKLLFSHVDNGTGIAMDLNPQLSGYFDITTAGFKQEASSYTKIIDQIDKKDNEKSVLFLSDYINEVNAAIESGMNSYVVIREGNTPIPDKELASHKIIYSLSELNL</sequence>
<comment type="function">
    <text evidence="1">Bifunctional enzyme that catalyzes the enolization of 2,3-diketo-5-methylthiopentyl-1-phosphate (DK-MTP-1-P) into the intermediate 2-hydroxy-3-keto-5-methylthiopentenyl-1-phosphate (HK-MTPenyl-1-P), which is then dephosphorylated to form the acireductone 1,2-dihydroxy-3-keto-5-methylthiopentene (DHK-MTPene).</text>
</comment>
<comment type="catalytic activity">
    <reaction evidence="1">
        <text>5-methylsulfanyl-2,3-dioxopentyl phosphate + H2O = 1,2-dihydroxy-5-(methylsulfanyl)pent-1-en-3-one + phosphate</text>
        <dbReference type="Rhea" id="RHEA:21700"/>
        <dbReference type="ChEBI" id="CHEBI:15377"/>
        <dbReference type="ChEBI" id="CHEBI:43474"/>
        <dbReference type="ChEBI" id="CHEBI:49252"/>
        <dbReference type="ChEBI" id="CHEBI:58828"/>
        <dbReference type="EC" id="3.1.3.77"/>
    </reaction>
</comment>
<comment type="cofactor">
    <cofactor evidence="1">
        <name>Mg(2+)</name>
        <dbReference type="ChEBI" id="CHEBI:18420"/>
    </cofactor>
    <text evidence="1">Binds 1 Mg(2+) ion per subunit.</text>
</comment>
<comment type="pathway">
    <text evidence="1">Amino-acid biosynthesis; L-methionine biosynthesis via salvage pathway; L-methionine from S-methyl-5-thio-alpha-D-ribose 1-phosphate: step 3/6.</text>
</comment>
<comment type="pathway">
    <text evidence="1">Amino-acid biosynthesis; L-methionine biosynthesis via salvage pathway; L-methionine from S-methyl-5-thio-alpha-D-ribose 1-phosphate: step 4/6.</text>
</comment>
<comment type="subunit">
    <text evidence="1">Monomer.</text>
</comment>
<comment type="subcellular location">
    <subcellularLocation>
        <location evidence="1">Cytoplasm</location>
    </subcellularLocation>
    <subcellularLocation>
        <location evidence="1">Nucleus</location>
    </subcellularLocation>
</comment>
<comment type="similarity">
    <text evidence="1">Belongs to the HAD-like hydrolase superfamily. MasA/MtnC family.</text>
</comment>
<gene>
    <name evidence="1" type="primary">UTR4</name>
    <name type="ORF">LELG_00943</name>
</gene>